<keyword id="KW-0665">Pyrimidine biosynthesis</keyword>
<keyword id="KW-1185">Reference proteome</keyword>
<keyword id="KW-0808">Transferase</keyword>
<dbReference type="EC" id="2.1.3.2" evidence="1"/>
<dbReference type="EMBL" id="AE007317">
    <property type="protein sequence ID" value="AAK99958.1"/>
    <property type="molecule type" value="Genomic_DNA"/>
</dbReference>
<dbReference type="PIR" id="B98016">
    <property type="entry name" value="B98016"/>
</dbReference>
<dbReference type="RefSeq" id="NP_358748.1">
    <property type="nucleotide sequence ID" value="NC_003098.1"/>
</dbReference>
<dbReference type="RefSeq" id="WP_001293822.1">
    <property type="nucleotide sequence ID" value="NC_003098.1"/>
</dbReference>
<dbReference type="SMR" id="Q8DPH9"/>
<dbReference type="STRING" id="171101.spr1155"/>
<dbReference type="KEGG" id="spr:spr1155"/>
<dbReference type="PATRIC" id="fig|171101.6.peg.1253"/>
<dbReference type="eggNOG" id="COG0540">
    <property type="taxonomic scope" value="Bacteria"/>
</dbReference>
<dbReference type="HOGENOM" id="CLU_043846_2_1_9"/>
<dbReference type="UniPathway" id="UPA00070">
    <property type="reaction ID" value="UER00116"/>
</dbReference>
<dbReference type="Proteomes" id="UP000000586">
    <property type="component" value="Chromosome"/>
</dbReference>
<dbReference type="GO" id="GO:0016597">
    <property type="term" value="F:amino acid binding"/>
    <property type="evidence" value="ECO:0007669"/>
    <property type="project" value="InterPro"/>
</dbReference>
<dbReference type="GO" id="GO:0004070">
    <property type="term" value="F:aspartate carbamoyltransferase activity"/>
    <property type="evidence" value="ECO:0007669"/>
    <property type="project" value="UniProtKB-UniRule"/>
</dbReference>
<dbReference type="GO" id="GO:0006207">
    <property type="term" value="P:'de novo' pyrimidine nucleobase biosynthetic process"/>
    <property type="evidence" value="ECO:0007669"/>
    <property type="project" value="InterPro"/>
</dbReference>
<dbReference type="GO" id="GO:0044205">
    <property type="term" value="P:'de novo' UMP biosynthetic process"/>
    <property type="evidence" value="ECO:0007669"/>
    <property type="project" value="UniProtKB-UniRule"/>
</dbReference>
<dbReference type="GO" id="GO:0006520">
    <property type="term" value="P:amino acid metabolic process"/>
    <property type="evidence" value="ECO:0007669"/>
    <property type="project" value="InterPro"/>
</dbReference>
<dbReference type="FunFam" id="3.40.50.1370:FF:000011">
    <property type="entry name" value="Aspartate carbamoyltransferase"/>
    <property type="match status" value="1"/>
</dbReference>
<dbReference type="Gene3D" id="3.40.50.1370">
    <property type="entry name" value="Aspartate/ornithine carbamoyltransferase"/>
    <property type="match status" value="2"/>
</dbReference>
<dbReference type="HAMAP" id="MF_00001">
    <property type="entry name" value="Asp_carb_tr"/>
    <property type="match status" value="1"/>
</dbReference>
<dbReference type="InterPro" id="IPR006132">
    <property type="entry name" value="Asp/Orn_carbamoyltranf_P-bd"/>
</dbReference>
<dbReference type="InterPro" id="IPR006130">
    <property type="entry name" value="Asp/Orn_carbamoylTrfase"/>
</dbReference>
<dbReference type="InterPro" id="IPR036901">
    <property type="entry name" value="Asp/Orn_carbamoylTrfase_sf"/>
</dbReference>
<dbReference type="InterPro" id="IPR002082">
    <property type="entry name" value="Asp_carbamoyltransf"/>
</dbReference>
<dbReference type="InterPro" id="IPR006131">
    <property type="entry name" value="Asp_carbamoyltransf_Asp/Orn-bd"/>
</dbReference>
<dbReference type="NCBIfam" id="TIGR00670">
    <property type="entry name" value="asp_carb_tr"/>
    <property type="match status" value="1"/>
</dbReference>
<dbReference type="NCBIfam" id="NF002032">
    <property type="entry name" value="PRK00856.1"/>
    <property type="match status" value="1"/>
</dbReference>
<dbReference type="PANTHER" id="PTHR45753:SF6">
    <property type="entry name" value="ASPARTATE CARBAMOYLTRANSFERASE"/>
    <property type="match status" value="1"/>
</dbReference>
<dbReference type="PANTHER" id="PTHR45753">
    <property type="entry name" value="ORNITHINE CARBAMOYLTRANSFERASE, MITOCHONDRIAL"/>
    <property type="match status" value="1"/>
</dbReference>
<dbReference type="Pfam" id="PF00185">
    <property type="entry name" value="OTCace"/>
    <property type="match status" value="1"/>
</dbReference>
<dbReference type="Pfam" id="PF02729">
    <property type="entry name" value="OTCace_N"/>
    <property type="match status" value="1"/>
</dbReference>
<dbReference type="PRINTS" id="PR00100">
    <property type="entry name" value="AOTCASE"/>
</dbReference>
<dbReference type="PRINTS" id="PR00101">
    <property type="entry name" value="ATCASE"/>
</dbReference>
<dbReference type="SUPFAM" id="SSF53671">
    <property type="entry name" value="Aspartate/ornithine carbamoyltransferase"/>
    <property type="match status" value="1"/>
</dbReference>
<dbReference type="PROSITE" id="PS00097">
    <property type="entry name" value="CARBAMOYLTRANSFERASE"/>
    <property type="match status" value="1"/>
</dbReference>
<proteinExistence type="inferred from homology"/>
<name>PYRB_STRR6</name>
<evidence type="ECO:0000255" key="1">
    <source>
        <dbReference type="HAMAP-Rule" id="MF_00001"/>
    </source>
</evidence>
<accession>Q8DPH9</accession>
<organism>
    <name type="scientific">Streptococcus pneumoniae (strain ATCC BAA-255 / R6)</name>
    <dbReference type="NCBI Taxonomy" id="171101"/>
    <lineage>
        <taxon>Bacteria</taxon>
        <taxon>Bacillati</taxon>
        <taxon>Bacillota</taxon>
        <taxon>Bacilli</taxon>
        <taxon>Lactobacillales</taxon>
        <taxon>Streptococcaceae</taxon>
        <taxon>Streptococcus</taxon>
    </lineage>
</organism>
<comment type="function">
    <text evidence="1">Catalyzes the condensation of carbamoyl phosphate and aspartate to form carbamoyl aspartate and inorganic phosphate, the committed step in the de novo pyrimidine nucleotide biosynthesis pathway.</text>
</comment>
<comment type="catalytic activity">
    <reaction evidence="1">
        <text>carbamoyl phosphate + L-aspartate = N-carbamoyl-L-aspartate + phosphate + H(+)</text>
        <dbReference type="Rhea" id="RHEA:20013"/>
        <dbReference type="ChEBI" id="CHEBI:15378"/>
        <dbReference type="ChEBI" id="CHEBI:29991"/>
        <dbReference type="ChEBI" id="CHEBI:32814"/>
        <dbReference type="ChEBI" id="CHEBI:43474"/>
        <dbReference type="ChEBI" id="CHEBI:58228"/>
        <dbReference type="EC" id="2.1.3.2"/>
    </reaction>
</comment>
<comment type="pathway">
    <text evidence="1">Pyrimidine metabolism; UMP biosynthesis via de novo pathway; (S)-dihydroorotate from bicarbonate: step 2/3.</text>
</comment>
<comment type="subunit">
    <text evidence="1">Heterododecamer (2C3:3R2) of six catalytic PyrB chains organized as two trimers (C3), and six regulatory PyrI chains organized as three dimers (R2).</text>
</comment>
<comment type="similarity">
    <text evidence="1">Belongs to the aspartate/ornithine carbamoyltransferase superfamily. ATCase family.</text>
</comment>
<feature type="chain" id="PRO_0000113207" description="Aspartate carbamoyltransferase catalytic subunit">
    <location>
        <begin position="1"/>
        <end position="307"/>
    </location>
</feature>
<feature type="binding site" evidence="1">
    <location>
        <position position="56"/>
    </location>
    <ligand>
        <name>carbamoyl phosphate</name>
        <dbReference type="ChEBI" id="CHEBI:58228"/>
    </ligand>
</feature>
<feature type="binding site" evidence="1">
    <location>
        <position position="57"/>
    </location>
    <ligand>
        <name>carbamoyl phosphate</name>
        <dbReference type="ChEBI" id="CHEBI:58228"/>
    </ligand>
</feature>
<feature type="binding site" evidence="1">
    <location>
        <position position="84"/>
    </location>
    <ligand>
        <name>L-aspartate</name>
        <dbReference type="ChEBI" id="CHEBI:29991"/>
    </ligand>
</feature>
<feature type="binding site" evidence="1">
    <location>
        <position position="106"/>
    </location>
    <ligand>
        <name>carbamoyl phosphate</name>
        <dbReference type="ChEBI" id="CHEBI:58228"/>
    </ligand>
</feature>
<feature type="binding site" evidence="1">
    <location>
        <position position="136"/>
    </location>
    <ligand>
        <name>carbamoyl phosphate</name>
        <dbReference type="ChEBI" id="CHEBI:58228"/>
    </ligand>
</feature>
<feature type="binding site" evidence="1">
    <location>
        <position position="139"/>
    </location>
    <ligand>
        <name>carbamoyl phosphate</name>
        <dbReference type="ChEBI" id="CHEBI:58228"/>
    </ligand>
</feature>
<feature type="binding site" evidence="1">
    <location>
        <position position="169"/>
    </location>
    <ligand>
        <name>L-aspartate</name>
        <dbReference type="ChEBI" id="CHEBI:29991"/>
    </ligand>
</feature>
<feature type="binding site" evidence="1">
    <location>
        <position position="221"/>
    </location>
    <ligand>
        <name>L-aspartate</name>
        <dbReference type="ChEBI" id="CHEBI:29991"/>
    </ligand>
</feature>
<feature type="binding site" evidence="1">
    <location>
        <position position="262"/>
    </location>
    <ligand>
        <name>carbamoyl phosphate</name>
        <dbReference type="ChEBI" id="CHEBI:58228"/>
    </ligand>
</feature>
<feature type="binding site" evidence="1">
    <location>
        <position position="263"/>
    </location>
    <ligand>
        <name>carbamoyl phosphate</name>
        <dbReference type="ChEBI" id="CHEBI:58228"/>
    </ligand>
</feature>
<sequence length="307" mass="34706">MSENQQALNHVVSMEDLTVDQVMKLIKRGIEFKNGAQIPYEDHPIVSNLFFEDSTRTHKSFEVAEIKLGLERLDFDVKTSSVNKGETLYDTILTLSALGVDVCVIRHPEVDYYRELIASPTITTSIINGGDGSGQHPSQSLLDLMTIYEEFGHFEGLKVAIAGDLDHSRVAKSNMQILKRLGSELFFAGPEEWRSQEFADYGKFVTIDEIIDQVDVMMFLRVQHERHDSGAVFSKEDYHAQHGLTQERYDRLKETAILMHPAPINRDVEIADHLVEAPKSRIVQQMTNGVFVRMAILESVLASRNAN</sequence>
<protein>
    <recommendedName>
        <fullName evidence="1">Aspartate carbamoyltransferase catalytic subunit</fullName>
        <ecNumber evidence="1">2.1.3.2</ecNumber>
    </recommendedName>
    <alternativeName>
        <fullName evidence="1">Aspartate transcarbamylase</fullName>
        <shortName evidence="1">ATCase</shortName>
    </alternativeName>
</protein>
<reference key="1">
    <citation type="journal article" date="2001" name="J. Bacteriol.">
        <title>Genome of the bacterium Streptococcus pneumoniae strain R6.</title>
        <authorList>
            <person name="Hoskins J."/>
            <person name="Alborn W.E. Jr."/>
            <person name="Arnold J."/>
            <person name="Blaszczak L.C."/>
            <person name="Burgett S."/>
            <person name="DeHoff B.S."/>
            <person name="Estrem S.T."/>
            <person name="Fritz L."/>
            <person name="Fu D.-J."/>
            <person name="Fuller W."/>
            <person name="Geringer C."/>
            <person name="Gilmour R."/>
            <person name="Glass J.S."/>
            <person name="Khoja H."/>
            <person name="Kraft A.R."/>
            <person name="Lagace R.E."/>
            <person name="LeBlanc D.J."/>
            <person name="Lee L.N."/>
            <person name="Lefkowitz E.J."/>
            <person name="Lu J."/>
            <person name="Matsushima P."/>
            <person name="McAhren S.M."/>
            <person name="McHenney M."/>
            <person name="McLeaster K."/>
            <person name="Mundy C.W."/>
            <person name="Nicas T.I."/>
            <person name="Norris F.H."/>
            <person name="O'Gara M."/>
            <person name="Peery R.B."/>
            <person name="Robertson G.T."/>
            <person name="Rockey P."/>
            <person name="Sun P.-M."/>
            <person name="Winkler M.E."/>
            <person name="Yang Y."/>
            <person name="Young-Bellido M."/>
            <person name="Zhao G."/>
            <person name="Zook C.A."/>
            <person name="Baltz R.H."/>
            <person name="Jaskunas S.R."/>
            <person name="Rosteck P.R. Jr."/>
            <person name="Skatrud P.L."/>
            <person name="Glass J.I."/>
        </authorList>
    </citation>
    <scope>NUCLEOTIDE SEQUENCE [LARGE SCALE GENOMIC DNA]</scope>
    <source>
        <strain>ATCC BAA-255 / R6</strain>
    </source>
</reference>
<gene>
    <name evidence="1" type="primary">pyrB</name>
    <name type="ordered locus">spr1155</name>
</gene>